<gene>
    <name type="primary">RRP15</name>
</gene>
<sequence length="286" mass="31491">MAAAVGDSRVSAGKKLKISLRKKRMKMVVASVASELEDKDKDASDNEGSLGSCGLEKDHFSSGDEAVEADNEDEAEPREDDNDSAAEATAGANAGWADAMARILSKKIPESKPTILVRNKELEKEKEKLKQERLEKRKQLDKKREWEMMCRVKPDVVKDKETERNLQRIATRGVVQLFNAVQKHQKNVDEKVKEAGGSIRKRAKLISSVSKKDFISVLRGMDGSASEKNSAGKNSKAKQTEAKSEEGPGWTILRDDFMMGASMKDWDKESDGPDGSRLGCGSDSDT</sequence>
<organism>
    <name type="scientific">Bos taurus</name>
    <name type="common">Bovine</name>
    <dbReference type="NCBI Taxonomy" id="9913"/>
    <lineage>
        <taxon>Eukaryota</taxon>
        <taxon>Metazoa</taxon>
        <taxon>Chordata</taxon>
        <taxon>Craniata</taxon>
        <taxon>Vertebrata</taxon>
        <taxon>Euteleostomi</taxon>
        <taxon>Mammalia</taxon>
        <taxon>Eutheria</taxon>
        <taxon>Laurasiatheria</taxon>
        <taxon>Artiodactyla</taxon>
        <taxon>Ruminantia</taxon>
        <taxon>Pecora</taxon>
        <taxon>Bovidae</taxon>
        <taxon>Bovinae</taxon>
        <taxon>Bos</taxon>
    </lineage>
</organism>
<name>RRP15_BOVIN</name>
<reference key="1">
    <citation type="submission" date="2005-08" db="EMBL/GenBank/DDBJ databases">
        <authorList>
            <consortium name="NIH - Mammalian Gene Collection (MGC) project"/>
        </authorList>
    </citation>
    <scope>NUCLEOTIDE SEQUENCE [LARGE SCALE MRNA]</scope>
    <source>
        <strain>Crossbred X Angus</strain>
        <tissue>Liver</tissue>
    </source>
</reference>
<dbReference type="EMBL" id="BC102551">
    <property type="protein sequence ID" value="AAI02552.1"/>
    <property type="molecule type" value="mRNA"/>
</dbReference>
<dbReference type="RefSeq" id="NP_001035596.1">
    <property type="nucleotide sequence ID" value="NM_001040506.2"/>
</dbReference>
<dbReference type="SMR" id="Q3T062"/>
<dbReference type="FunCoup" id="Q3T062">
    <property type="interactions" value="2783"/>
</dbReference>
<dbReference type="STRING" id="9913.ENSBTAP00000012966"/>
<dbReference type="PaxDb" id="9913-ENSBTAP00000012966"/>
<dbReference type="GeneID" id="505387"/>
<dbReference type="KEGG" id="bta:505387"/>
<dbReference type="CTD" id="51018"/>
<dbReference type="VEuPathDB" id="HostDB:ENSBTAG00000009838"/>
<dbReference type="eggNOG" id="KOG2974">
    <property type="taxonomic scope" value="Eukaryota"/>
</dbReference>
<dbReference type="HOGENOM" id="CLU_079732_0_0_1"/>
<dbReference type="InParanoid" id="Q3T062"/>
<dbReference type="OMA" id="FVKQRFY"/>
<dbReference type="OrthoDB" id="20949at2759"/>
<dbReference type="TreeFam" id="TF106119"/>
<dbReference type="Proteomes" id="UP000009136">
    <property type="component" value="Chromosome 16"/>
</dbReference>
<dbReference type="Bgee" id="ENSBTAG00000009838">
    <property type="expression patterns" value="Expressed in oocyte and 107 other cell types or tissues"/>
</dbReference>
<dbReference type="GO" id="GO:0030687">
    <property type="term" value="C:preribosome, large subunit precursor"/>
    <property type="evidence" value="ECO:0000318"/>
    <property type="project" value="GO_Central"/>
</dbReference>
<dbReference type="GO" id="GO:0000460">
    <property type="term" value="P:maturation of 5.8S rRNA"/>
    <property type="evidence" value="ECO:0000318"/>
    <property type="project" value="GO_Central"/>
</dbReference>
<dbReference type="GO" id="GO:0000470">
    <property type="term" value="P:maturation of LSU-rRNA"/>
    <property type="evidence" value="ECO:0000318"/>
    <property type="project" value="GO_Central"/>
</dbReference>
<dbReference type="InterPro" id="IPR012459">
    <property type="entry name" value="Rrp15"/>
</dbReference>
<dbReference type="PANTHER" id="PTHR13245">
    <property type="entry name" value="RRP15-LIKE PROTEIN"/>
    <property type="match status" value="1"/>
</dbReference>
<dbReference type="PANTHER" id="PTHR13245:SF14">
    <property type="entry name" value="RRP15-LIKE PROTEIN"/>
    <property type="match status" value="1"/>
</dbReference>
<dbReference type="Pfam" id="PF07890">
    <property type="entry name" value="Rrp15p"/>
    <property type="match status" value="1"/>
</dbReference>
<protein>
    <recommendedName>
        <fullName>RRP15-like protein</fullName>
    </recommendedName>
    <alternativeName>
        <fullName>Ribosomal RNA-processing protein 15</fullName>
    </alternativeName>
</protein>
<proteinExistence type="evidence at transcript level"/>
<keyword id="KW-0007">Acetylation</keyword>
<keyword id="KW-0164">Citrullination</keyword>
<keyword id="KW-0175">Coiled coil</keyword>
<keyword id="KW-1017">Isopeptide bond</keyword>
<keyword id="KW-0597">Phosphoprotein</keyword>
<keyword id="KW-1185">Reference proteome</keyword>
<keyword id="KW-0832">Ubl conjugation</keyword>
<comment type="PTM">
    <text evidence="1">Citrullinated by PADI4.</text>
</comment>
<comment type="similarity">
    <text evidence="5">Belongs to the RRP15 family.</text>
</comment>
<feature type="initiator methionine" description="Removed" evidence="2">
    <location>
        <position position="1"/>
    </location>
</feature>
<feature type="chain" id="PRO_0000273212" description="RRP15-like protein">
    <location>
        <begin position="2"/>
        <end position="286"/>
    </location>
</feature>
<feature type="region of interest" description="Disordered" evidence="4">
    <location>
        <begin position="33"/>
        <end position="93"/>
    </location>
</feature>
<feature type="region of interest" description="Disordered" evidence="4">
    <location>
        <begin position="220"/>
        <end position="286"/>
    </location>
</feature>
<feature type="coiled-coil region" evidence="3">
    <location>
        <begin position="112"/>
        <end position="148"/>
    </location>
</feature>
<feature type="compositionally biased region" description="Acidic residues" evidence="4">
    <location>
        <begin position="65"/>
        <end position="84"/>
    </location>
</feature>
<feature type="modified residue" description="N-acetylalanine" evidence="2">
    <location>
        <position position="2"/>
    </location>
</feature>
<feature type="modified residue" description="Citrulline" evidence="1">
    <location>
        <position position="9"/>
    </location>
</feature>
<feature type="modified residue" description="Phosphoserine" evidence="2">
    <location>
        <position position="11"/>
    </location>
</feature>
<feature type="modified residue" description="Phosphoserine" evidence="2">
    <location>
        <position position="62"/>
    </location>
</feature>
<feature type="modified residue" description="Phosphoserine" evidence="2">
    <location>
        <position position="210"/>
    </location>
</feature>
<feature type="modified residue" description="Phosphoserine" evidence="2">
    <location>
        <position position="270"/>
    </location>
</feature>
<feature type="modified residue" description="Phosphoserine" evidence="2">
    <location>
        <position position="284"/>
    </location>
</feature>
<feature type="cross-link" description="Glycyl lysine isopeptide (Lys-Gly) (interchain with G-Cter in SUMO2)" evidence="2">
    <location>
        <position position="112"/>
    </location>
</feature>
<feature type="cross-link" description="Glycyl lysine isopeptide (Lys-Gly) (interchain with G-Cter in SUMO2)" evidence="2">
    <location>
        <position position="183"/>
    </location>
</feature>
<feature type="cross-link" description="Glycyl lysine isopeptide (Lys-Gly) (interchain with G-Cter in SUMO2)" evidence="2">
    <location>
        <position position="212"/>
    </location>
</feature>
<feature type="cross-link" description="Glycyl lysine isopeptide (Lys-Gly) (interchain with G-Cter in SUMO1); alternate" evidence="2">
    <location>
        <position position="243"/>
    </location>
</feature>
<feature type="cross-link" description="Glycyl lysine isopeptide (Lys-Gly) (interchain with G-Cter in SUMO2); alternate" evidence="2">
    <location>
        <position position="243"/>
    </location>
</feature>
<accession>Q3T062</accession>
<evidence type="ECO:0000250" key="1"/>
<evidence type="ECO:0000250" key="2">
    <source>
        <dbReference type="UniProtKB" id="Q9Y3B9"/>
    </source>
</evidence>
<evidence type="ECO:0000255" key="3"/>
<evidence type="ECO:0000256" key="4">
    <source>
        <dbReference type="SAM" id="MobiDB-lite"/>
    </source>
</evidence>
<evidence type="ECO:0000305" key="5"/>